<dbReference type="EC" id="6.3.1.21" evidence="1"/>
<dbReference type="EMBL" id="AE014613">
    <property type="protein sequence ID" value="AAO68666.1"/>
    <property type="molecule type" value="Genomic_DNA"/>
</dbReference>
<dbReference type="EMBL" id="AL513382">
    <property type="protein sequence ID" value="CAD05634.1"/>
    <property type="molecule type" value="Genomic_DNA"/>
</dbReference>
<dbReference type="RefSeq" id="NP_456451.1">
    <property type="nucleotide sequence ID" value="NC_003198.1"/>
</dbReference>
<dbReference type="RefSeq" id="WP_000173426.1">
    <property type="nucleotide sequence ID" value="NZ_WSUR01000004.1"/>
</dbReference>
<dbReference type="SMR" id="Q8Z5X3"/>
<dbReference type="STRING" id="220341.gene:17585999"/>
<dbReference type="KEGG" id="stt:t0994"/>
<dbReference type="KEGG" id="sty:STY2089"/>
<dbReference type="PATRIC" id="fig|220341.7.peg.2101"/>
<dbReference type="eggNOG" id="COG0027">
    <property type="taxonomic scope" value="Bacteria"/>
</dbReference>
<dbReference type="HOGENOM" id="CLU_011534_1_3_6"/>
<dbReference type="OMA" id="GMVTMIT"/>
<dbReference type="OrthoDB" id="9804625at2"/>
<dbReference type="UniPathway" id="UPA00074">
    <property type="reaction ID" value="UER00127"/>
</dbReference>
<dbReference type="Proteomes" id="UP000000541">
    <property type="component" value="Chromosome"/>
</dbReference>
<dbReference type="Proteomes" id="UP000002670">
    <property type="component" value="Chromosome"/>
</dbReference>
<dbReference type="GO" id="GO:0005829">
    <property type="term" value="C:cytosol"/>
    <property type="evidence" value="ECO:0007669"/>
    <property type="project" value="TreeGrafter"/>
</dbReference>
<dbReference type="GO" id="GO:0005524">
    <property type="term" value="F:ATP binding"/>
    <property type="evidence" value="ECO:0007669"/>
    <property type="project" value="UniProtKB-UniRule"/>
</dbReference>
<dbReference type="GO" id="GO:0000287">
    <property type="term" value="F:magnesium ion binding"/>
    <property type="evidence" value="ECO:0007669"/>
    <property type="project" value="InterPro"/>
</dbReference>
<dbReference type="GO" id="GO:0043815">
    <property type="term" value="F:phosphoribosylglycinamide formyltransferase 2 activity"/>
    <property type="evidence" value="ECO:0007669"/>
    <property type="project" value="UniProtKB-UniRule"/>
</dbReference>
<dbReference type="GO" id="GO:0004644">
    <property type="term" value="F:phosphoribosylglycinamide formyltransferase activity"/>
    <property type="evidence" value="ECO:0007669"/>
    <property type="project" value="InterPro"/>
</dbReference>
<dbReference type="GO" id="GO:0006189">
    <property type="term" value="P:'de novo' IMP biosynthetic process"/>
    <property type="evidence" value="ECO:0007669"/>
    <property type="project" value="UniProtKB-UniRule"/>
</dbReference>
<dbReference type="FunFam" id="3.30.1490.20:FF:000013">
    <property type="entry name" value="Formate-dependent phosphoribosylglycinamide formyltransferase"/>
    <property type="match status" value="1"/>
</dbReference>
<dbReference type="FunFam" id="3.30.470.20:FF:000027">
    <property type="entry name" value="Formate-dependent phosphoribosylglycinamide formyltransferase"/>
    <property type="match status" value="1"/>
</dbReference>
<dbReference type="FunFam" id="3.40.50.20:FF:000007">
    <property type="entry name" value="Formate-dependent phosphoribosylglycinamide formyltransferase"/>
    <property type="match status" value="1"/>
</dbReference>
<dbReference type="Gene3D" id="3.40.50.20">
    <property type="match status" value="1"/>
</dbReference>
<dbReference type="Gene3D" id="3.30.1490.20">
    <property type="entry name" value="ATP-grasp fold, A domain"/>
    <property type="match status" value="1"/>
</dbReference>
<dbReference type="Gene3D" id="3.30.470.20">
    <property type="entry name" value="ATP-grasp fold, B domain"/>
    <property type="match status" value="1"/>
</dbReference>
<dbReference type="HAMAP" id="MF_01643">
    <property type="entry name" value="PurT"/>
    <property type="match status" value="1"/>
</dbReference>
<dbReference type="InterPro" id="IPR011761">
    <property type="entry name" value="ATP-grasp"/>
</dbReference>
<dbReference type="InterPro" id="IPR003135">
    <property type="entry name" value="ATP-grasp_carboxylate-amine"/>
</dbReference>
<dbReference type="InterPro" id="IPR013815">
    <property type="entry name" value="ATP_grasp_subdomain_1"/>
</dbReference>
<dbReference type="InterPro" id="IPR016185">
    <property type="entry name" value="PreATP-grasp_dom_sf"/>
</dbReference>
<dbReference type="InterPro" id="IPR005862">
    <property type="entry name" value="PurT"/>
</dbReference>
<dbReference type="InterPro" id="IPR054350">
    <property type="entry name" value="PurT/PurK_preATP-grasp"/>
</dbReference>
<dbReference type="InterPro" id="IPR048740">
    <property type="entry name" value="PurT_C"/>
</dbReference>
<dbReference type="InterPro" id="IPR011054">
    <property type="entry name" value="Rudment_hybrid_motif"/>
</dbReference>
<dbReference type="NCBIfam" id="NF006766">
    <property type="entry name" value="PRK09288.1"/>
    <property type="match status" value="1"/>
</dbReference>
<dbReference type="NCBIfam" id="TIGR01142">
    <property type="entry name" value="purT"/>
    <property type="match status" value="1"/>
</dbReference>
<dbReference type="PANTHER" id="PTHR43055">
    <property type="entry name" value="FORMATE-DEPENDENT PHOSPHORIBOSYLGLYCINAMIDE FORMYLTRANSFERASE"/>
    <property type="match status" value="1"/>
</dbReference>
<dbReference type="PANTHER" id="PTHR43055:SF1">
    <property type="entry name" value="FORMATE-DEPENDENT PHOSPHORIBOSYLGLYCINAMIDE FORMYLTRANSFERASE"/>
    <property type="match status" value="1"/>
</dbReference>
<dbReference type="Pfam" id="PF02222">
    <property type="entry name" value="ATP-grasp"/>
    <property type="match status" value="1"/>
</dbReference>
<dbReference type="Pfam" id="PF21244">
    <property type="entry name" value="PurT_C"/>
    <property type="match status" value="1"/>
</dbReference>
<dbReference type="Pfam" id="PF22660">
    <property type="entry name" value="RS_preATP-grasp-like"/>
    <property type="match status" value="1"/>
</dbReference>
<dbReference type="SUPFAM" id="SSF56059">
    <property type="entry name" value="Glutathione synthetase ATP-binding domain-like"/>
    <property type="match status" value="1"/>
</dbReference>
<dbReference type="SUPFAM" id="SSF52440">
    <property type="entry name" value="PreATP-grasp domain"/>
    <property type="match status" value="1"/>
</dbReference>
<dbReference type="SUPFAM" id="SSF51246">
    <property type="entry name" value="Rudiment single hybrid motif"/>
    <property type="match status" value="1"/>
</dbReference>
<dbReference type="PROSITE" id="PS50975">
    <property type="entry name" value="ATP_GRASP"/>
    <property type="match status" value="1"/>
</dbReference>
<gene>
    <name evidence="1" type="primary">purT</name>
    <name type="ordered locus">STY2089</name>
    <name type="ordered locus">t0994</name>
</gene>
<sequence>MTLLGTALRPAATRVMLLGAGELGKEVAIECQRLGIEVIAVDRYPDAPAMHVAHRSHVINMLDGEALRHVITEEKPHYIVPEIEAIATDTLRELEGEGLNVVPCARATQLTMNREGIRRLAAEELGLPTSTYRFADSEASFHDAVAAVGFPCIVKPVMSSSGKGQSFIRSAEQLAQAWEYAQQGGRAGAGRVIVEGVVKFDFEITLLTVSAVDGVHFCAPVGHRQQDGDYRESWQPQQMSELALKRAQEIARHVVLALGGHGLFGVELFVCGDEVIFSEVSPRPHDTGMVTLISQDLSEFALHVRAFLGMPIGAIRQYGPAASAVILPQLTSQNVTFDDVHAAVGAGVQVRLFGKPEIDGTRRLGVALATGENVEEAVIRAKKAASRVTVKG</sequence>
<protein>
    <recommendedName>
        <fullName evidence="1">Formate-dependent phosphoribosylglycinamide formyltransferase</fullName>
        <ecNumber evidence="1">6.3.1.21</ecNumber>
    </recommendedName>
    <alternativeName>
        <fullName evidence="1">5'-phosphoribosylglycinamide transformylase 2</fullName>
    </alternativeName>
    <alternativeName>
        <fullName evidence="1">Formate-dependent GAR transformylase</fullName>
    </alternativeName>
    <alternativeName>
        <fullName evidence="1">GAR transformylase 2</fullName>
        <shortName evidence="1">GART 2</shortName>
    </alternativeName>
    <alternativeName>
        <fullName evidence="1">Non-folate glycinamide ribonucleotide transformylase</fullName>
    </alternativeName>
    <alternativeName>
        <fullName evidence="1">Phosphoribosylglycinamide formyltransferase 2</fullName>
    </alternativeName>
</protein>
<feature type="chain" id="PRO_0000319226" description="Formate-dependent phosphoribosylglycinamide formyltransferase">
    <location>
        <begin position="1"/>
        <end position="392"/>
    </location>
</feature>
<feature type="domain" description="ATP-grasp" evidence="1">
    <location>
        <begin position="119"/>
        <end position="308"/>
    </location>
</feature>
<feature type="binding site" evidence="1">
    <location>
        <begin position="22"/>
        <end position="23"/>
    </location>
    <ligand>
        <name>N(1)-(5-phospho-beta-D-ribosyl)glycinamide</name>
        <dbReference type="ChEBI" id="CHEBI:143788"/>
    </ligand>
</feature>
<feature type="binding site" evidence="1">
    <location>
        <position position="82"/>
    </location>
    <ligand>
        <name>N(1)-(5-phospho-beta-D-ribosyl)glycinamide</name>
        <dbReference type="ChEBI" id="CHEBI:143788"/>
    </ligand>
</feature>
<feature type="binding site" evidence="1">
    <location>
        <position position="114"/>
    </location>
    <ligand>
        <name>ATP</name>
        <dbReference type="ChEBI" id="CHEBI:30616"/>
    </ligand>
</feature>
<feature type="binding site" evidence="1">
    <location>
        <position position="155"/>
    </location>
    <ligand>
        <name>ATP</name>
        <dbReference type="ChEBI" id="CHEBI:30616"/>
    </ligand>
</feature>
<feature type="binding site" evidence="1">
    <location>
        <begin position="160"/>
        <end position="165"/>
    </location>
    <ligand>
        <name>ATP</name>
        <dbReference type="ChEBI" id="CHEBI:30616"/>
    </ligand>
</feature>
<feature type="binding site" evidence="1">
    <location>
        <begin position="195"/>
        <end position="198"/>
    </location>
    <ligand>
        <name>ATP</name>
        <dbReference type="ChEBI" id="CHEBI:30616"/>
    </ligand>
</feature>
<feature type="binding site" evidence="1">
    <location>
        <position position="203"/>
    </location>
    <ligand>
        <name>ATP</name>
        <dbReference type="ChEBI" id="CHEBI:30616"/>
    </ligand>
</feature>
<feature type="binding site" evidence="1">
    <location>
        <position position="267"/>
    </location>
    <ligand>
        <name>Mg(2+)</name>
        <dbReference type="ChEBI" id="CHEBI:18420"/>
    </ligand>
</feature>
<feature type="binding site" evidence="1">
    <location>
        <position position="279"/>
    </location>
    <ligand>
        <name>Mg(2+)</name>
        <dbReference type="ChEBI" id="CHEBI:18420"/>
    </ligand>
</feature>
<feature type="binding site" evidence="1">
    <location>
        <position position="286"/>
    </location>
    <ligand>
        <name>N(1)-(5-phospho-beta-D-ribosyl)glycinamide</name>
        <dbReference type="ChEBI" id="CHEBI:143788"/>
    </ligand>
</feature>
<feature type="binding site" evidence="1">
    <location>
        <position position="355"/>
    </location>
    <ligand>
        <name>N(1)-(5-phospho-beta-D-ribosyl)glycinamide</name>
        <dbReference type="ChEBI" id="CHEBI:143788"/>
    </ligand>
</feature>
<feature type="binding site" evidence="1">
    <location>
        <begin position="362"/>
        <end position="363"/>
    </location>
    <ligand>
        <name>N(1)-(5-phospho-beta-D-ribosyl)glycinamide</name>
        <dbReference type="ChEBI" id="CHEBI:143788"/>
    </ligand>
</feature>
<proteinExistence type="inferred from homology"/>
<accession>Q8Z5X3</accession>
<accession>Q7CAK2</accession>
<comment type="function">
    <text evidence="1">Involved in the de novo purine biosynthesis. Catalyzes the transfer of formate to 5-phospho-ribosyl-glycinamide (GAR), producing 5-phospho-ribosyl-N-formylglycinamide (FGAR). Formate is provided by PurU via hydrolysis of 10-formyl-tetrahydrofolate.</text>
</comment>
<comment type="catalytic activity">
    <reaction evidence="1">
        <text>N(1)-(5-phospho-beta-D-ribosyl)glycinamide + formate + ATP = N(2)-formyl-N(1)-(5-phospho-beta-D-ribosyl)glycinamide + ADP + phosphate + H(+)</text>
        <dbReference type="Rhea" id="RHEA:24829"/>
        <dbReference type="ChEBI" id="CHEBI:15378"/>
        <dbReference type="ChEBI" id="CHEBI:15740"/>
        <dbReference type="ChEBI" id="CHEBI:30616"/>
        <dbReference type="ChEBI" id="CHEBI:43474"/>
        <dbReference type="ChEBI" id="CHEBI:143788"/>
        <dbReference type="ChEBI" id="CHEBI:147286"/>
        <dbReference type="ChEBI" id="CHEBI:456216"/>
        <dbReference type="EC" id="6.3.1.21"/>
    </reaction>
    <physiologicalReaction direction="left-to-right" evidence="1">
        <dbReference type="Rhea" id="RHEA:24830"/>
    </physiologicalReaction>
</comment>
<comment type="pathway">
    <text evidence="1">Purine metabolism; IMP biosynthesis via de novo pathway; N(2)-formyl-N(1)-(5-phospho-D-ribosyl)glycinamide from N(1)-(5-phospho-D-ribosyl)glycinamide (formate route): step 1/1.</text>
</comment>
<comment type="subunit">
    <text evidence="1">Homodimer.</text>
</comment>
<comment type="similarity">
    <text evidence="1">Belongs to the PurK/PurT family.</text>
</comment>
<keyword id="KW-0067">ATP-binding</keyword>
<keyword id="KW-0436">Ligase</keyword>
<keyword id="KW-0460">Magnesium</keyword>
<keyword id="KW-0479">Metal-binding</keyword>
<keyword id="KW-0547">Nucleotide-binding</keyword>
<keyword id="KW-0658">Purine biosynthesis</keyword>
<evidence type="ECO:0000255" key="1">
    <source>
        <dbReference type="HAMAP-Rule" id="MF_01643"/>
    </source>
</evidence>
<organism>
    <name type="scientific">Salmonella typhi</name>
    <dbReference type="NCBI Taxonomy" id="90370"/>
    <lineage>
        <taxon>Bacteria</taxon>
        <taxon>Pseudomonadati</taxon>
        <taxon>Pseudomonadota</taxon>
        <taxon>Gammaproteobacteria</taxon>
        <taxon>Enterobacterales</taxon>
        <taxon>Enterobacteriaceae</taxon>
        <taxon>Salmonella</taxon>
    </lineage>
</organism>
<reference key="1">
    <citation type="journal article" date="2001" name="Nature">
        <title>Complete genome sequence of a multiple drug resistant Salmonella enterica serovar Typhi CT18.</title>
        <authorList>
            <person name="Parkhill J."/>
            <person name="Dougan G."/>
            <person name="James K.D."/>
            <person name="Thomson N.R."/>
            <person name="Pickard D."/>
            <person name="Wain J."/>
            <person name="Churcher C.M."/>
            <person name="Mungall K.L."/>
            <person name="Bentley S.D."/>
            <person name="Holden M.T.G."/>
            <person name="Sebaihia M."/>
            <person name="Baker S."/>
            <person name="Basham D."/>
            <person name="Brooks K."/>
            <person name="Chillingworth T."/>
            <person name="Connerton P."/>
            <person name="Cronin A."/>
            <person name="Davis P."/>
            <person name="Davies R.M."/>
            <person name="Dowd L."/>
            <person name="White N."/>
            <person name="Farrar J."/>
            <person name="Feltwell T."/>
            <person name="Hamlin N."/>
            <person name="Haque A."/>
            <person name="Hien T.T."/>
            <person name="Holroyd S."/>
            <person name="Jagels K."/>
            <person name="Krogh A."/>
            <person name="Larsen T.S."/>
            <person name="Leather S."/>
            <person name="Moule S."/>
            <person name="O'Gaora P."/>
            <person name="Parry C."/>
            <person name="Quail M.A."/>
            <person name="Rutherford K.M."/>
            <person name="Simmonds M."/>
            <person name="Skelton J."/>
            <person name="Stevens K."/>
            <person name="Whitehead S."/>
            <person name="Barrell B.G."/>
        </authorList>
    </citation>
    <scope>NUCLEOTIDE SEQUENCE [LARGE SCALE GENOMIC DNA]</scope>
    <source>
        <strain>CT18</strain>
    </source>
</reference>
<reference key="2">
    <citation type="journal article" date="2003" name="J. Bacteriol.">
        <title>Comparative genomics of Salmonella enterica serovar Typhi strains Ty2 and CT18.</title>
        <authorList>
            <person name="Deng W."/>
            <person name="Liou S.-R."/>
            <person name="Plunkett G. III"/>
            <person name="Mayhew G.F."/>
            <person name="Rose D.J."/>
            <person name="Burland V."/>
            <person name="Kodoyianni V."/>
            <person name="Schwartz D.C."/>
            <person name="Blattner F.R."/>
        </authorList>
    </citation>
    <scope>NUCLEOTIDE SEQUENCE [LARGE SCALE GENOMIC DNA]</scope>
    <source>
        <strain>ATCC 700931 / Ty2</strain>
    </source>
</reference>
<name>PURT_SALTI</name>